<organism>
    <name type="scientific">Mycobacterium bovis (strain ATCC BAA-935 / AF2122/97)</name>
    <dbReference type="NCBI Taxonomy" id="233413"/>
    <lineage>
        <taxon>Bacteria</taxon>
        <taxon>Bacillati</taxon>
        <taxon>Actinomycetota</taxon>
        <taxon>Actinomycetes</taxon>
        <taxon>Mycobacteriales</taxon>
        <taxon>Mycobacteriaceae</taxon>
        <taxon>Mycobacterium</taxon>
        <taxon>Mycobacterium tuberculosis complex</taxon>
    </lineage>
</organism>
<protein>
    <recommendedName>
        <fullName>3-oxoacyl-[acyl-carrier-protein] synthase 2</fullName>
        <ecNumber evidence="1">2.3.1.294</ecNumber>
    </recommendedName>
    <alternativeName>
        <fullName>Beta-ketoacyl-ACP synthase 2</fullName>
        <shortName>KAS 2</shortName>
    </alternativeName>
</protein>
<accession>P63457</accession>
<accession>A0A1R3Y0M8</accession>
<accession>Q10525</accession>
<accession>X2BJP8</accession>
<reference key="1">
    <citation type="journal article" date="2003" name="Proc. Natl. Acad. Sci. U.S.A.">
        <title>The complete genome sequence of Mycobacterium bovis.</title>
        <authorList>
            <person name="Garnier T."/>
            <person name="Eiglmeier K."/>
            <person name="Camus J.-C."/>
            <person name="Medina N."/>
            <person name="Mansoor H."/>
            <person name="Pryor M."/>
            <person name="Duthoy S."/>
            <person name="Grondin S."/>
            <person name="Lacroix C."/>
            <person name="Monsempe C."/>
            <person name="Simon S."/>
            <person name="Harris B."/>
            <person name="Atkin R."/>
            <person name="Doggett J."/>
            <person name="Mayes R."/>
            <person name="Keating L."/>
            <person name="Wheeler P.R."/>
            <person name="Parkhill J."/>
            <person name="Barrell B.G."/>
            <person name="Cole S.T."/>
            <person name="Gordon S.V."/>
            <person name="Hewinson R.G."/>
        </authorList>
    </citation>
    <scope>NUCLEOTIDE SEQUENCE [LARGE SCALE GENOMIC DNA]</scope>
    <source>
        <strain>ATCC BAA-935 / AF2122/97</strain>
    </source>
</reference>
<reference key="2">
    <citation type="journal article" date="2017" name="Genome Announc.">
        <title>Updated reference genome sequence and annotation of Mycobacterium bovis AF2122/97.</title>
        <authorList>
            <person name="Malone K.M."/>
            <person name="Farrell D."/>
            <person name="Stuber T.P."/>
            <person name="Schubert O.T."/>
            <person name="Aebersold R."/>
            <person name="Robbe-Austerman S."/>
            <person name="Gordon S.V."/>
        </authorList>
    </citation>
    <scope>NUCLEOTIDE SEQUENCE [LARGE SCALE GENOMIC DNA]</scope>
    <scope>GENOME REANNOTATION</scope>
    <source>
        <strain>ATCC BAA-935 / AF2122/97</strain>
    </source>
</reference>
<evidence type="ECO:0000250" key="1">
    <source>
        <dbReference type="UniProtKB" id="P9WQD7"/>
    </source>
</evidence>
<evidence type="ECO:0000255" key="2">
    <source>
        <dbReference type="PROSITE-ProRule" id="PRU01348"/>
    </source>
</evidence>
<evidence type="ECO:0000305" key="3"/>
<feature type="chain" id="PRO_0000180330" description="3-oxoacyl-[acyl-carrier-protein] synthase 2">
    <location>
        <begin position="1"/>
        <end position="417"/>
    </location>
</feature>
<feature type="domain" description="Ketosynthase family 3 (KS3)" evidence="2">
    <location>
        <begin position="10"/>
        <end position="416"/>
    </location>
</feature>
<feature type="active site" description="For beta-ketoacyl synthase activity" evidence="2">
    <location>
        <position position="170"/>
    </location>
</feature>
<feature type="active site" description="For beta-ketoacyl synthase activity" evidence="2">
    <location>
        <position position="311"/>
    </location>
</feature>
<feature type="active site" description="For beta-ketoacyl synthase activity" evidence="2">
    <location>
        <position position="346"/>
    </location>
</feature>
<gene>
    <name type="primary">kasB</name>
    <name type="ordered locus">BQ2027_MB2270</name>
</gene>
<name>KASB_MYCBO</name>
<comment type="function">
    <text evidence="1">Part of the mycobacterial fatty acid elongation system FAS-II, which is involved in mycolic acid biosynthesis. Catalyzes the elongation of long chain acyl-ACP substrates by the addition of two carbons from malonyl-ACP to an acyl acceptor. Involved in extension of the mycolate chains to full lengths and produces longer chain multiunsaturated hydrocarbons averaging 54 carbons in length.</text>
</comment>
<comment type="catalytic activity">
    <reaction evidence="1">
        <text>an ultra-long-chain di-unsaturated fatty acyl-[ACP] + malonyl-[ACP] + H(+) = a 3-oxo-ultra-long-chain di-unsaturated fatty acyl-[ACP] + holo-[ACP] + CO2</text>
        <dbReference type="Rhea" id="RHEA:65308"/>
        <dbReference type="Rhea" id="RHEA-COMP:9623"/>
        <dbReference type="Rhea" id="RHEA-COMP:9685"/>
        <dbReference type="Rhea" id="RHEA-COMP:16767"/>
        <dbReference type="Rhea" id="RHEA-COMP:16774"/>
        <dbReference type="ChEBI" id="CHEBI:15378"/>
        <dbReference type="ChEBI" id="CHEBI:16526"/>
        <dbReference type="ChEBI" id="CHEBI:64479"/>
        <dbReference type="ChEBI" id="CHEBI:78449"/>
        <dbReference type="ChEBI" id="CHEBI:156401"/>
        <dbReference type="ChEBI" id="CHEBI:156402"/>
        <dbReference type="EC" id="2.3.1.294"/>
    </reaction>
    <physiologicalReaction direction="left-to-right" evidence="1">
        <dbReference type="Rhea" id="RHEA:65309"/>
    </physiologicalReaction>
</comment>
<comment type="pathway">
    <text evidence="1">Lipid metabolism; mycolic acid biosynthesis.</text>
</comment>
<comment type="subcellular location">
    <subcellularLocation>
        <location evidence="1">Cytoplasm</location>
    </subcellularLocation>
</comment>
<comment type="similarity">
    <text evidence="3">Belongs to the thiolase-like superfamily. Beta-ketoacyl-ACP synthases family.</text>
</comment>
<comment type="sequence caution" evidence="3">
    <conflict type="erroneous initiation">
        <sequence resource="EMBL-CDS" id="SIU00881"/>
    </conflict>
    <text>Extended N-terminus.</text>
</comment>
<keyword id="KW-0012">Acyltransferase</keyword>
<keyword id="KW-0963">Cytoplasm</keyword>
<keyword id="KW-0275">Fatty acid biosynthesis</keyword>
<keyword id="KW-0276">Fatty acid metabolism</keyword>
<keyword id="KW-0444">Lipid biosynthesis</keyword>
<keyword id="KW-0443">Lipid metabolism</keyword>
<keyword id="KW-1185">Reference proteome</keyword>
<keyword id="KW-0808">Transferase</keyword>
<sequence>MTELVTGKAFPYVVVTGIAMTTALATDAETTWKLLLDRQSGIRTLDDPFVEEFDLPVRIGGHLLEEFDHQLTRIELRRMGYLQRMSTVLSRRLWENAGSPEVDTNRLMVSIGTGLGSAEELVFSYDDMRARGMKAVSPLTVQKYMPNGAAAAVGLERHAKAGVMTPVSACASGAEAIARAWQQIVLGEADAAICGGVETRIEAVPIAGFAQMRIVMSTNNDDPAGACRPFDRDRDGFVFGEGGALLLIETEEHAKARGANILARIMGASITSDGFHMVAPDPNGERAGHAITRAIQLAGLAPGDIDHVNAHATGTQVGDLAEGRAINNALGGNRPAVYAPKSALGHSVGAVGAVESILTVLALRDQVIPPTLNLVNLDPEIDLDVVAGEPRPGNYRYAINNSFGFGGHNVAIAFGRY</sequence>
<proteinExistence type="inferred from homology"/>
<dbReference type="EC" id="2.3.1.294" evidence="1"/>
<dbReference type="EMBL" id="LT708304">
    <property type="protein sequence ID" value="SIU00881.1"/>
    <property type="status" value="ALT_INIT"/>
    <property type="molecule type" value="Genomic_DNA"/>
</dbReference>
<dbReference type="RefSeq" id="NP_855919.1">
    <property type="nucleotide sequence ID" value="NC_002945.3"/>
</dbReference>
<dbReference type="RefSeq" id="WP_003411576.1">
    <property type="nucleotide sequence ID" value="NC_002945.4"/>
</dbReference>
<dbReference type="SMR" id="P63457"/>
<dbReference type="GeneID" id="45426226"/>
<dbReference type="KEGG" id="mbo:BQ2027_MB2270"/>
<dbReference type="PATRIC" id="fig|233413.5.peg.2491"/>
<dbReference type="UniPathway" id="UPA00915"/>
<dbReference type="Proteomes" id="UP000001419">
    <property type="component" value="Chromosome"/>
</dbReference>
<dbReference type="GO" id="GO:0005829">
    <property type="term" value="C:cytosol"/>
    <property type="evidence" value="ECO:0007669"/>
    <property type="project" value="TreeGrafter"/>
</dbReference>
<dbReference type="GO" id="GO:0004315">
    <property type="term" value="F:3-oxoacyl-[acyl-carrier-protein] synthase activity"/>
    <property type="evidence" value="ECO:0007669"/>
    <property type="project" value="TreeGrafter"/>
</dbReference>
<dbReference type="GO" id="GO:0006633">
    <property type="term" value="P:fatty acid biosynthetic process"/>
    <property type="evidence" value="ECO:0007669"/>
    <property type="project" value="UniProtKB-KW"/>
</dbReference>
<dbReference type="CDD" id="cd00834">
    <property type="entry name" value="KAS_I_II"/>
    <property type="match status" value="1"/>
</dbReference>
<dbReference type="FunFam" id="3.40.47.10:FF:000029">
    <property type="entry name" value="3-oxoacyl-[acyl-carrier-protein] synthase 1"/>
    <property type="match status" value="1"/>
</dbReference>
<dbReference type="FunFam" id="3.40.47.10:FF:000018">
    <property type="entry name" value="3-oxoacyl-[acyl-carrier-protein] synthase 2"/>
    <property type="match status" value="1"/>
</dbReference>
<dbReference type="Gene3D" id="3.40.47.10">
    <property type="match status" value="2"/>
</dbReference>
<dbReference type="InterPro" id="IPR000794">
    <property type="entry name" value="Beta-ketoacyl_synthase"/>
</dbReference>
<dbReference type="InterPro" id="IPR014031">
    <property type="entry name" value="Ketoacyl_synth_C"/>
</dbReference>
<dbReference type="InterPro" id="IPR014030">
    <property type="entry name" value="Ketoacyl_synth_N"/>
</dbReference>
<dbReference type="InterPro" id="IPR020841">
    <property type="entry name" value="PKS_Beta-ketoAc_synthase_dom"/>
</dbReference>
<dbReference type="InterPro" id="IPR016039">
    <property type="entry name" value="Thiolase-like"/>
</dbReference>
<dbReference type="NCBIfam" id="NF005589">
    <property type="entry name" value="PRK07314.1"/>
    <property type="match status" value="1"/>
</dbReference>
<dbReference type="NCBIfam" id="NF005916">
    <property type="entry name" value="PRK07910.1"/>
    <property type="match status" value="1"/>
</dbReference>
<dbReference type="PANTHER" id="PTHR11712:SF336">
    <property type="entry name" value="3-OXOACYL-[ACYL-CARRIER-PROTEIN] SYNTHASE, MITOCHONDRIAL"/>
    <property type="match status" value="1"/>
</dbReference>
<dbReference type="PANTHER" id="PTHR11712">
    <property type="entry name" value="POLYKETIDE SYNTHASE-RELATED"/>
    <property type="match status" value="1"/>
</dbReference>
<dbReference type="Pfam" id="PF00109">
    <property type="entry name" value="ketoacyl-synt"/>
    <property type="match status" value="1"/>
</dbReference>
<dbReference type="Pfam" id="PF02801">
    <property type="entry name" value="Ketoacyl-synt_C"/>
    <property type="match status" value="1"/>
</dbReference>
<dbReference type="SMART" id="SM00825">
    <property type="entry name" value="PKS_KS"/>
    <property type="match status" value="1"/>
</dbReference>
<dbReference type="SUPFAM" id="SSF53901">
    <property type="entry name" value="Thiolase-like"/>
    <property type="match status" value="2"/>
</dbReference>
<dbReference type="PROSITE" id="PS52004">
    <property type="entry name" value="KS3_2"/>
    <property type="match status" value="1"/>
</dbReference>